<sequence length="180" mass="20298">MTQRLKTVYYETIVPKLKEQFNYTNIHQVPKVIKVTVNRGLGDASQNAKALESSIAELATITGQKPVVTRARKAIAGFKIRKGMPVGVMVTLRSERMYAFLDRLISLALPRIRDFRGISGNSFDGRGNYSLGIREQLIFPEIDYDKIDQIRGMDISIITTAQTDEEGRALLTEMGMPFRK</sequence>
<gene>
    <name evidence="1" type="primary">rplE</name>
    <name evidence="1" type="synonym">rpl5</name>
    <name type="ordered locus">PCC7424_3715</name>
</gene>
<keyword id="KW-1185">Reference proteome</keyword>
<keyword id="KW-0687">Ribonucleoprotein</keyword>
<keyword id="KW-0689">Ribosomal protein</keyword>
<keyword id="KW-0694">RNA-binding</keyword>
<keyword id="KW-0699">rRNA-binding</keyword>
<keyword id="KW-0820">tRNA-binding</keyword>
<proteinExistence type="inferred from homology"/>
<organism>
    <name type="scientific">Gloeothece citriformis (strain PCC 7424)</name>
    <name type="common">Cyanothece sp. (strain PCC 7424)</name>
    <dbReference type="NCBI Taxonomy" id="65393"/>
    <lineage>
        <taxon>Bacteria</taxon>
        <taxon>Bacillati</taxon>
        <taxon>Cyanobacteriota</taxon>
        <taxon>Cyanophyceae</taxon>
        <taxon>Oscillatoriophycideae</taxon>
        <taxon>Chroococcales</taxon>
        <taxon>Aphanothecaceae</taxon>
        <taxon>Gloeothece</taxon>
        <taxon>Gloeothece citriformis</taxon>
    </lineage>
</organism>
<evidence type="ECO:0000255" key="1">
    <source>
        <dbReference type="HAMAP-Rule" id="MF_01333"/>
    </source>
</evidence>
<evidence type="ECO:0000305" key="2"/>
<accession>B7KHZ9</accession>
<feature type="chain" id="PRO_1000142384" description="Large ribosomal subunit protein uL5">
    <location>
        <begin position="1"/>
        <end position="180"/>
    </location>
</feature>
<protein>
    <recommendedName>
        <fullName evidence="1">Large ribosomal subunit protein uL5</fullName>
    </recommendedName>
    <alternativeName>
        <fullName evidence="2">50S ribosomal protein L5</fullName>
    </alternativeName>
</protein>
<comment type="function">
    <text evidence="1">This is one of the proteins that bind and probably mediate the attachment of the 5S RNA into the large ribosomal subunit, where it forms part of the central protuberance. In the 70S ribosome it contacts protein S13 of the 30S subunit (bridge B1b), connecting the 2 subunits; this bridge is implicated in subunit movement. Contacts the P site tRNA; the 5S rRNA and some of its associated proteins might help stabilize positioning of ribosome-bound tRNAs.</text>
</comment>
<comment type="subunit">
    <text evidence="1">Part of the 50S ribosomal subunit; part of the 5S rRNA/L5/L18/L25 subcomplex. Contacts the 5S rRNA and the P site tRNA. Forms a bridge to the 30S subunit in the 70S ribosome.</text>
</comment>
<comment type="similarity">
    <text evidence="1">Belongs to the universal ribosomal protein uL5 family.</text>
</comment>
<reference key="1">
    <citation type="journal article" date="2011" name="MBio">
        <title>Novel metabolic attributes of the genus Cyanothece, comprising a group of unicellular nitrogen-fixing Cyanobacteria.</title>
        <authorList>
            <person name="Bandyopadhyay A."/>
            <person name="Elvitigala T."/>
            <person name="Welsh E."/>
            <person name="Stockel J."/>
            <person name="Liberton M."/>
            <person name="Min H."/>
            <person name="Sherman L.A."/>
            <person name="Pakrasi H.B."/>
        </authorList>
    </citation>
    <scope>NUCLEOTIDE SEQUENCE [LARGE SCALE GENOMIC DNA]</scope>
    <source>
        <strain>PCC 7424</strain>
    </source>
</reference>
<dbReference type="EMBL" id="CP001291">
    <property type="protein sequence ID" value="ACK72096.1"/>
    <property type="molecule type" value="Genomic_DNA"/>
</dbReference>
<dbReference type="RefSeq" id="WP_015955689.1">
    <property type="nucleotide sequence ID" value="NC_011729.1"/>
</dbReference>
<dbReference type="SMR" id="B7KHZ9"/>
<dbReference type="STRING" id="65393.PCC7424_3715"/>
<dbReference type="KEGG" id="cyc:PCC7424_3715"/>
<dbReference type="eggNOG" id="COG0094">
    <property type="taxonomic scope" value="Bacteria"/>
</dbReference>
<dbReference type="HOGENOM" id="CLU_061015_2_1_3"/>
<dbReference type="OrthoDB" id="9806626at2"/>
<dbReference type="Proteomes" id="UP000002384">
    <property type="component" value="Chromosome"/>
</dbReference>
<dbReference type="GO" id="GO:1990904">
    <property type="term" value="C:ribonucleoprotein complex"/>
    <property type="evidence" value="ECO:0007669"/>
    <property type="project" value="UniProtKB-KW"/>
</dbReference>
<dbReference type="GO" id="GO:0005840">
    <property type="term" value="C:ribosome"/>
    <property type="evidence" value="ECO:0007669"/>
    <property type="project" value="UniProtKB-KW"/>
</dbReference>
<dbReference type="GO" id="GO:0019843">
    <property type="term" value="F:rRNA binding"/>
    <property type="evidence" value="ECO:0007669"/>
    <property type="project" value="UniProtKB-UniRule"/>
</dbReference>
<dbReference type="GO" id="GO:0003735">
    <property type="term" value="F:structural constituent of ribosome"/>
    <property type="evidence" value="ECO:0007669"/>
    <property type="project" value="InterPro"/>
</dbReference>
<dbReference type="GO" id="GO:0000049">
    <property type="term" value="F:tRNA binding"/>
    <property type="evidence" value="ECO:0007669"/>
    <property type="project" value="UniProtKB-UniRule"/>
</dbReference>
<dbReference type="GO" id="GO:0006412">
    <property type="term" value="P:translation"/>
    <property type="evidence" value="ECO:0007669"/>
    <property type="project" value="UniProtKB-UniRule"/>
</dbReference>
<dbReference type="FunFam" id="3.30.1440.10:FF:000001">
    <property type="entry name" value="50S ribosomal protein L5"/>
    <property type="match status" value="1"/>
</dbReference>
<dbReference type="Gene3D" id="3.30.1440.10">
    <property type="match status" value="1"/>
</dbReference>
<dbReference type="HAMAP" id="MF_01333_B">
    <property type="entry name" value="Ribosomal_uL5_B"/>
    <property type="match status" value="1"/>
</dbReference>
<dbReference type="InterPro" id="IPR002132">
    <property type="entry name" value="Ribosomal_uL5"/>
</dbReference>
<dbReference type="InterPro" id="IPR020930">
    <property type="entry name" value="Ribosomal_uL5_bac-type"/>
</dbReference>
<dbReference type="InterPro" id="IPR031309">
    <property type="entry name" value="Ribosomal_uL5_C"/>
</dbReference>
<dbReference type="InterPro" id="IPR020929">
    <property type="entry name" value="Ribosomal_uL5_CS"/>
</dbReference>
<dbReference type="InterPro" id="IPR022803">
    <property type="entry name" value="Ribosomal_uL5_dom_sf"/>
</dbReference>
<dbReference type="InterPro" id="IPR031310">
    <property type="entry name" value="Ribosomal_uL5_N"/>
</dbReference>
<dbReference type="NCBIfam" id="NF000585">
    <property type="entry name" value="PRK00010.1"/>
    <property type="match status" value="1"/>
</dbReference>
<dbReference type="PANTHER" id="PTHR11994">
    <property type="entry name" value="60S RIBOSOMAL PROTEIN L11-RELATED"/>
    <property type="match status" value="1"/>
</dbReference>
<dbReference type="Pfam" id="PF00281">
    <property type="entry name" value="Ribosomal_L5"/>
    <property type="match status" value="1"/>
</dbReference>
<dbReference type="Pfam" id="PF00673">
    <property type="entry name" value="Ribosomal_L5_C"/>
    <property type="match status" value="1"/>
</dbReference>
<dbReference type="PIRSF" id="PIRSF002161">
    <property type="entry name" value="Ribosomal_L5"/>
    <property type="match status" value="1"/>
</dbReference>
<dbReference type="SUPFAM" id="SSF55282">
    <property type="entry name" value="RL5-like"/>
    <property type="match status" value="1"/>
</dbReference>
<dbReference type="PROSITE" id="PS00358">
    <property type="entry name" value="RIBOSOMAL_L5"/>
    <property type="match status" value="1"/>
</dbReference>
<name>RL5_GLOC7</name>